<name>RM06_RECAM</name>
<geneLocation type="mitochondrion"/>
<proteinExistence type="inferred from homology"/>
<gene>
    <name type="primary">RPL6</name>
</gene>
<reference key="1">
    <citation type="journal article" date="1997" name="Nature">
        <title>An ancestral mitochondrial DNA resembling a eubacterial genome in miniature.</title>
        <authorList>
            <person name="Lang B.F."/>
            <person name="Burger G."/>
            <person name="O'Kelly C.J."/>
            <person name="Cedergren R."/>
            <person name="Golding G.B."/>
            <person name="Lemieux C."/>
            <person name="Sankoff D."/>
            <person name="Turmel M."/>
            <person name="Gray M.W."/>
        </authorList>
    </citation>
    <scope>NUCLEOTIDE SEQUENCE [GENOMIC DNA]</scope>
    <source>
        <strain>ATCC 50394</strain>
    </source>
</reference>
<comment type="subcellular location">
    <subcellularLocation>
        <location>Mitochondrion</location>
    </subcellularLocation>
</comment>
<comment type="similarity">
    <text evidence="1">Belongs to the universal ribosomal protein uL6 family.</text>
</comment>
<feature type="chain" id="PRO_0000131096" description="Large ribosomal subunit protein uL6m">
    <location>
        <begin position="1"/>
        <end position="185"/>
    </location>
</feature>
<organism>
    <name type="scientific">Reclinomonas americana</name>
    <dbReference type="NCBI Taxonomy" id="48483"/>
    <lineage>
        <taxon>Eukaryota</taxon>
        <taxon>Discoba</taxon>
        <taxon>Jakobida</taxon>
        <taxon>Histionina</taxon>
        <taxon>Histionidae</taxon>
        <taxon>Reclinomonas</taxon>
    </lineage>
</organism>
<keyword id="KW-0496">Mitochondrion</keyword>
<keyword id="KW-0687">Ribonucleoprotein</keyword>
<keyword id="KW-0689">Ribosomal protein</keyword>
<sequence length="185" mass="20911">MSHIGSKQIKIPKNVSIDLSMNKIYVRGDLGKLELPLNNINIHLKNIENDQFLILDPINTGTKKQKTASYIMWGTYRTLIENMLIGVSKGYSKTIELVGVGYKAQLIDKKLVLKIGFSIEINYEIPSDIKVDCSRSNIIVISGIDKQKVNQVAAEIRLLRKPEPYKGKGIRYLGEVIRLKEGKKK</sequence>
<accession>O21255</accession>
<protein>
    <recommendedName>
        <fullName evidence="1">Large ribosomal subunit protein uL6m</fullName>
    </recommendedName>
    <alternativeName>
        <fullName>60S ribosomal protein L6, mitochondrial</fullName>
    </alternativeName>
</protein>
<evidence type="ECO:0000305" key="1"/>
<dbReference type="EMBL" id="AF007261">
    <property type="protein sequence ID" value="AAD11882.1"/>
    <property type="molecule type" value="Genomic_DNA"/>
</dbReference>
<dbReference type="PIR" id="S78149">
    <property type="entry name" value="S78149"/>
</dbReference>
<dbReference type="RefSeq" id="NP_044767.1">
    <property type="nucleotide sequence ID" value="NC_001823.1"/>
</dbReference>
<dbReference type="SMR" id="O21255"/>
<dbReference type="GeneID" id="801144"/>
<dbReference type="GO" id="GO:0005762">
    <property type="term" value="C:mitochondrial large ribosomal subunit"/>
    <property type="evidence" value="ECO:0007669"/>
    <property type="project" value="TreeGrafter"/>
</dbReference>
<dbReference type="GO" id="GO:0019843">
    <property type="term" value="F:rRNA binding"/>
    <property type="evidence" value="ECO:0007669"/>
    <property type="project" value="InterPro"/>
</dbReference>
<dbReference type="GO" id="GO:0003735">
    <property type="term" value="F:structural constituent of ribosome"/>
    <property type="evidence" value="ECO:0007669"/>
    <property type="project" value="InterPro"/>
</dbReference>
<dbReference type="GO" id="GO:0006412">
    <property type="term" value="P:translation"/>
    <property type="evidence" value="ECO:0007669"/>
    <property type="project" value="InterPro"/>
</dbReference>
<dbReference type="FunFam" id="3.90.930.12:FF:000001">
    <property type="entry name" value="50S ribosomal protein L6"/>
    <property type="match status" value="1"/>
</dbReference>
<dbReference type="Gene3D" id="3.90.930.12">
    <property type="entry name" value="Ribosomal protein L6, alpha-beta domain"/>
    <property type="match status" value="2"/>
</dbReference>
<dbReference type="InterPro" id="IPR000702">
    <property type="entry name" value="Ribosomal_uL6-like"/>
</dbReference>
<dbReference type="InterPro" id="IPR036789">
    <property type="entry name" value="Ribosomal_uL6-like_a/b-dom_sf"/>
</dbReference>
<dbReference type="InterPro" id="IPR020040">
    <property type="entry name" value="Ribosomal_uL6_a/b-dom"/>
</dbReference>
<dbReference type="InterPro" id="IPR019906">
    <property type="entry name" value="Ribosomal_uL6_bac-type"/>
</dbReference>
<dbReference type="InterPro" id="IPR002358">
    <property type="entry name" value="Ribosomal_uL6_CS"/>
</dbReference>
<dbReference type="NCBIfam" id="TIGR03654">
    <property type="entry name" value="L6_bact"/>
    <property type="match status" value="1"/>
</dbReference>
<dbReference type="PANTHER" id="PTHR11655">
    <property type="entry name" value="60S/50S RIBOSOMAL PROTEIN L6/L9"/>
    <property type="match status" value="1"/>
</dbReference>
<dbReference type="PANTHER" id="PTHR11655:SF14">
    <property type="entry name" value="LARGE RIBOSOMAL SUBUNIT PROTEIN UL6M"/>
    <property type="match status" value="1"/>
</dbReference>
<dbReference type="Pfam" id="PF00347">
    <property type="entry name" value="Ribosomal_L6"/>
    <property type="match status" value="2"/>
</dbReference>
<dbReference type="PIRSF" id="PIRSF002162">
    <property type="entry name" value="Ribosomal_L6"/>
    <property type="match status" value="1"/>
</dbReference>
<dbReference type="PRINTS" id="PR00059">
    <property type="entry name" value="RIBOSOMALL6"/>
</dbReference>
<dbReference type="SUPFAM" id="SSF56053">
    <property type="entry name" value="Ribosomal protein L6"/>
    <property type="match status" value="2"/>
</dbReference>
<dbReference type="PROSITE" id="PS00525">
    <property type="entry name" value="RIBOSOMAL_L6_1"/>
    <property type="match status" value="1"/>
</dbReference>